<gene>
    <name evidence="1" type="primary">glcB</name>
    <name type="ordered locus">mlr4664</name>
</gene>
<evidence type="ECO:0000255" key="1">
    <source>
        <dbReference type="HAMAP-Rule" id="MF_00641"/>
    </source>
</evidence>
<proteinExistence type="inferred from homology"/>
<dbReference type="EC" id="2.3.3.9" evidence="1"/>
<dbReference type="EMBL" id="BA000012">
    <property type="protein sequence ID" value="BAB51267.1"/>
    <property type="molecule type" value="Genomic_DNA"/>
</dbReference>
<dbReference type="RefSeq" id="WP_010912609.1">
    <property type="nucleotide sequence ID" value="NC_002678.2"/>
</dbReference>
<dbReference type="SMR" id="Q98DK4"/>
<dbReference type="KEGG" id="mlo:mlr4664"/>
<dbReference type="PATRIC" id="fig|266835.9.peg.3688"/>
<dbReference type="eggNOG" id="COG2225">
    <property type="taxonomic scope" value="Bacteria"/>
</dbReference>
<dbReference type="HOGENOM" id="CLU_028446_1_0_5"/>
<dbReference type="UniPathway" id="UPA00703">
    <property type="reaction ID" value="UER00720"/>
</dbReference>
<dbReference type="Proteomes" id="UP000000552">
    <property type="component" value="Chromosome"/>
</dbReference>
<dbReference type="GO" id="GO:0005829">
    <property type="term" value="C:cytosol"/>
    <property type="evidence" value="ECO:0007669"/>
    <property type="project" value="TreeGrafter"/>
</dbReference>
<dbReference type="GO" id="GO:0000287">
    <property type="term" value="F:magnesium ion binding"/>
    <property type="evidence" value="ECO:0007669"/>
    <property type="project" value="TreeGrafter"/>
</dbReference>
<dbReference type="GO" id="GO:0004474">
    <property type="term" value="F:malate synthase activity"/>
    <property type="evidence" value="ECO:0007669"/>
    <property type="project" value="UniProtKB-UniRule"/>
</dbReference>
<dbReference type="GO" id="GO:0009436">
    <property type="term" value="P:glyoxylate catabolic process"/>
    <property type="evidence" value="ECO:0007669"/>
    <property type="project" value="TreeGrafter"/>
</dbReference>
<dbReference type="GO" id="GO:0006097">
    <property type="term" value="P:glyoxylate cycle"/>
    <property type="evidence" value="ECO:0007669"/>
    <property type="project" value="UniProtKB-UniRule"/>
</dbReference>
<dbReference type="GO" id="GO:0006099">
    <property type="term" value="P:tricarboxylic acid cycle"/>
    <property type="evidence" value="ECO:0007669"/>
    <property type="project" value="UniProtKB-KW"/>
</dbReference>
<dbReference type="CDD" id="cd00728">
    <property type="entry name" value="malate_synt_G"/>
    <property type="match status" value="1"/>
</dbReference>
<dbReference type="FunFam" id="3.20.20.360:FF:000002">
    <property type="entry name" value="Malate synthase G"/>
    <property type="match status" value="1"/>
</dbReference>
<dbReference type="Gene3D" id="3.20.20.360">
    <property type="entry name" value="Malate synthase, domain 3"/>
    <property type="match status" value="2"/>
</dbReference>
<dbReference type="Gene3D" id="1.20.1220.12">
    <property type="entry name" value="Malate synthase, domain III"/>
    <property type="match status" value="1"/>
</dbReference>
<dbReference type="HAMAP" id="MF_00641">
    <property type="entry name" value="Malate_synth_G"/>
    <property type="match status" value="1"/>
</dbReference>
<dbReference type="InterPro" id="IPR044856">
    <property type="entry name" value="Malate_synth_C_sf"/>
</dbReference>
<dbReference type="InterPro" id="IPR011076">
    <property type="entry name" value="Malate_synth_sf"/>
</dbReference>
<dbReference type="InterPro" id="IPR001465">
    <property type="entry name" value="Malate_synthase_TIM"/>
</dbReference>
<dbReference type="InterPro" id="IPR006253">
    <property type="entry name" value="Malate_synthG"/>
</dbReference>
<dbReference type="InterPro" id="IPR048355">
    <property type="entry name" value="MS_C"/>
</dbReference>
<dbReference type="InterPro" id="IPR048356">
    <property type="entry name" value="MS_N"/>
</dbReference>
<dbReference type="InterPro" id="IPR046363">
    <property type="entry name" value="MS_N_TIM-barrel_dom"/>
</dbReference>
<dbReference type="InterPro" id="IPR048357">
    <property type="entry name" value="MSG_insertion"/>
</dbReference>
<dbReference type="NCBIfam" id="TIGR01345">
    <property type="entry name" value="malate_syn_G"/>
    <property type="match status" value="1"/>
</dbReference>
<dbReference type="NCBIfam" id="NF002825">
    <property type="entry name" value="PRK02999.1"/>
    <property type="match status" value="1"/>
</dbReference>
<dbReference type="PANTHER" id="PTHR42739">
    <property type="entry name" value="MALATE SYNTHASE G"/>
    <property type="match status" value="1"/>
</dbReference>
<dbReference type="PANTHER" id="PTHR42739:SF1">
    <property type="entry name" value="MALATE SYNTHASE G"/>
    <property type="match status" value="1"/>
</dbReference>
<dbReference type="Pfam" id="PF20659">
    <property type="entry name" value="MS_C"/>
    <property type="match status" value="1"/>
</dbReference>
<dbReference type="Pfam" id="PF20656">
    <property type="entry name" value="MS_N"/>
    <property type="match status" value="1"/>
</dbReference>
<dbReference type="Pfam" id="PF01274">
    <property type="entry name" value="MS_TIM-barrel"/>
    <property type="match status" value="1"/>
</dbReference>
<dbReference type="Pfam" id="PF20658">
    <property type="entry name" value="MSG_insertion"/>
    <property type="match status" value="1"/>
</dbReference>
<dbReference type="SUPFAM" id="SSF51645">
    <property type="entry name" value="Malate synthase G"/>
    <property type="match status" value="1"/>
</dbReference>
<reference key="1">
    <citation type="journal article" date="2000" name="DNA Res.">
        <title>Complete genome structure of the nitrogen-fixing symbiotic bacterium Mesorhizobium loti.</title>
        <authorList>
            <person name="Kaneko T."/>
            <person name="Nakamura Y."/>
            <person name="Sato S."/>
            <person name="Asamizu E."/>
            <person name="Kato T."/>
            <person name="Sasamoto S."/>
            <person name="Watanabe A."/>
            <person name="Idesawa K."/>
            <person name="Ishikawa A."/>
            <person name="Kawashima K."/>
            <person name="Kimura T."/>
            <person name="Kishida Y."/>
            <person name="Kiyokawa C."/>
            <person name="Kohara M."/>
            <person name="Matsumoto M."/>
            <person name="Matsuno A."/>
            <person name="Mochizuki Y."/>
            <person name="Nakayama S."/>
            <person name="Nakazaki N."/>
            <person name="Shimpo S."/>
            <person name="Sugimoto M."/>
            <person name="Takeuchi C."/>
            <person name="Yamada M."/>
            <person name="Tabata S."/>
        </authorList>
    </citation>
    <scope>NUCLEOTIDE SEQUENCE [LARGE SCALE GENOMIC DNA]</scope>
    <source>
        <strain>LMG 29417 / CECT 9101 / MAFF 303099</strain>
    </source>
</reference>
<keyword id="KW-0963">Cytoplasm</keyword>
<keyword id="KW-0329">Glyoxylate bypass</keyword>
<keyword id="KW-0460">Magnesium</keyword>
<keyword id="KW-0479">Metal-binding</keyword>
<keyword id="KW-0558">Oxidation</keyword>
<keyword id="KW-0808">Transferase</keyword>
<keyword id="KW-0816">Tricarboxylic acid cycle</keyword>
<protein>
    <recommendedName>
        <fullName evidence="1">Malate synthase G</fullName>
        <ecNumber evidence="1">2.3.3.9</ecNumber>
    </recommendedName>
</protein>
<comment type="function">
    <text evidence="1">Involved in the glycolate utilization. Catalyzes the condensation and subsequent hydrolysis of acetyl-coenzyme A (acetyl-CoA) and glyoxylate to form malate and CoA.</text>
</comment>
<comment type="catalytic activity">
    <reaction evidence="1">
        <text>glyoxylate + acetyl-CoA + H2O = (S)-malate + CoA + H(+)</text>
        <dbReference type="Rhea" id="RHEA:18181"/>
        <dbReference type="ChEBI" id="CHEBI:15377"/>
        <dbReference type="ChEBI" id="CHEBI:15378"/>
        <dbReference type="ChEBI" id="CHEBI:15589"/>
        <dbReference type="ChEBI" id="CHEBI:36655"/>
        <dbReference type="ChEBI" id="CHEBI:57287"/>
        <dbReference type="ChEBI" id="CHEBI:57288"/>
        <dbReference type="EC" id="2.3.3.9"/>
    </reaction>
</comment>
<comment type="cofactor">
    <cofactor evidence="1">
        <name>Mg(2+)</name>
        <dbReference type="ChEBI" id="CHEBI:18420"/>
    </cofactor>
</comment>
<comment type="pathway">
    <text evidence="1">Carbohydrate metabolism; glyoxylate cycle; (S)-malate from isocitrate: step 2/2.</text>
</comment>
<comment type="subunit">
    <text evidence="1">Monomer.</text>
</comment>
<comment type="subcellular location">
    <subcellularLocation>
        <location evidence="1">Cytoplasm</location>
    </subcellularLocation>
</comment>
<comment type="similarity">
    <text evidence="1">Belongs to the malate synthase family. GlcB subfamily.</text>
</comment>
<name>MASZ_RHILO</name>
<organism>
    <name type="scientific">Mesorhizobium japonicum (strain LMG 29417 / CECT 9101 / MAFF 303099)</name>
    <name type="common">Mesorhizobium loti (strain MAFF 303099)</name>
    <dbReference type="NCBI Taxonomy" id="266835"/>
    <lineage>
        <taxon>Bacteria</taxon>
        <taxon>Pseudomonadati</taxon>
        <taxon>Pseudomonadota</taxon>
        <taxon>Alphaproteobacteria</taxon>
        <taxon>Hyphomicrobiales</taxon>
        <taxon>Phyllobacteriaceae</taxon>
        <taxon>Mesorhizobium</taxon>
    </lineage>
</organism>
<sequence>MTDRIEIAGLRIAGELHDFVAGEALPGTGIAADAFWSGFSAIVHDLAPKNRALLKKRDAMQERLDGWYRDNGAPVDMEVYKSFLKEIGYLVPEGPAFSVSTDNVDPEIAVVAGPQLVVPVMNARYALNAANARWGSLYDALYGTDAIPETGGAEKGKGFNPARGAKVIAWAKDFLDQSVPLTSGKWAGVNGLSVAHGALKLGAGAGGTTLADPRQFAGYRGDAANPDAVLLVKNGLHIEIVVDRNNQIGRTDPAGIADVILESALTTIQDCEDSVAAVDAQDKVVVYRNWLGLMKGDLAEEISKAGRSFVRKLNADRAYTAPAGGQITVPGRSLMLVRNVGHLMTNPAILDRDGNEVPEGIMDAALTALIALHDVGPEGRRANSRAGSMYVVKPKMHGPEEVAFAVEIFDRVEALLGMPRNTIKMGIMDEERRTTVNLKEAIRAARERVVFINTGFLDRTGDEIHTSMEAGPMIRKGDMKQAAWISAYEAWNVDTGLECGLAGHAQIGKGMWAMPDLMAAMLEQKIAHPKAGANTAWVPSPTAATLHATHYHKVDVHAVQAALKSRPKAKLDDILSVPVAVRPNWTPDEIQRELDNNAQGILGYVVRWIDQGVGCSKVPDINDVGLMEDRATLRISSQHIANWLRHKVCSEIQVRDSLQRMAAIVDRQNVGDPLYRPMAPDFDKSIAFQAACDLVFKGTSQPNGYTEPVLHARRLELKAQR</sequence>
<feature type="chain" id="PRO_0000166896" description="Malate synthase G">
    <location>
        <begin position="1"/>
        <end position="721"/>
    </location>
</feature>
<feature type="active site" description="Proton acceptor" evidence="1">
    <location>
        <position position="338"/>
    </location>
</feature>
<feature type="active site" description="Proton donor" evidence="1">
    <location>
        <position position="629"/>
    </location>
</feature>
<feature type="binding site" evidence="1">
    <location>
        <position position="117"/>
    </location>
    <ligand>
        <name>acetyl-CoA</name>
        <dbReference type="ChEBI" id="CHEBI:57288"/>
    </ligand>
</feature>
<feature type="binding site" evidence="1">
    <location>
        <begin position="124"/>
        <end position="125"/>
    </location>
    <ligand>
        <name>acetyl-CoA</name>
        <dbReference type="ChEBI" id="CHEBI:57288"/>
    </ligand>
</feature>
<feature type="binding site" evidence="1">
    <location>
        <position position="274"/>
    </location>
    <ligand>
        <name>acetyl-CoA</name>
        <dbReference type="ChEBI" id="CHEBI:57288"/>
    </ligand>
</feature>
<feature type="binding site" evidence="1">
    <location>
        <position position="311"/>
    </location>
    <ligand>
        <name>acetyl-CoA</name>
        <dbReference type="ChEBI" id="CHEBI:57288"/>
    </ligand>
</feature>
<feature type="binding site" evidence="1">
    <location>
        <position position="338"/>
    </location>
    <ligand>
        <name>glyoxylate</name>
        <dbReference type="ChEBI" id="CHEBI:36655"/>
    </ligand>
</feature>
<feature type="binding site" evidence="1">
    <location>
        <position position="430"/>
    </location>
    <ligand>
        <name>glyoxylate</name>
        <dbReference type="ChEBI" id="CHEBI:36655"/>
    </ligand>
</feature>
<feature type="binding site" evidence="1">
    <location>
        <position position="430"/>
    </location>
    <ligand>
        <name>Mg(2+)</name>
        <dbReference type="ChEBI" id="CHEBI:18420"/>
    </ligand>
</feature>
<feature type="binding site" evidence="1">
    <location>
        <begin position="455"/>
        <end position="458"/>
    </location>
    <ligand>
        <name>glyoxylate</name>
        <dbReference type="ChEBI" id="CHEBI:36655"/>
    </ligand>
</feature>
<feature type="binding site" evidence="1">
    <location>
        <position position="458"/>
    </location>
    <ligand>
        <name>Mg(2+)</name>
        <dbReference type="ChEBI" id="CHEBI:18420"/>
    </ligand>
</feature>
<feature type="binding site" evidence="1">
    <location>
        <position position="539"/>
    </location>
    <ligand>
        <name>acetyl-CoA</name>
        <dbReference type="ChEBI" id="CHEBI:57288"/>
    </ligand>
</feature>
<feature type="modified residue" description="Cysteine sulfenic acid (-SOH)" evidence="1">
    <location>
        <position position="615"/>
    </location>
</feature>
<accession>Q98DK4</accession>